<comment type="function">
    <text evidence="1 5 6 7 8">Catalytic core component of RNA polymerase II (Pol II), a DNA-dependent RNA polymerase which synthesizes mRNA precursors and many functional non-coding RNAs using the four ribonucleoside triphosphates as substrates (By similarity) (PubMed:27193682, PubMed:30190596, PubMed:9852112). Pol II-mediated transcription cycle proceeds through transcription initiation, transcription elongation and transcription termination stages. During transcription initiation, Pol II pre-initiation complex (PIC) is recruited to DNA promoters, with focused-type promoters containing either the initiator (Inr) element, or the TATA-box found in cell-type specific genes and dispersed-type promoters that often contain hypomethylated CpG islands usually found in housekeeping genes. Once the polymerase has escaped from the promoter it enters the elongation phase during which RNA is actively polymerized, based on complementarity with the template DNA strand. Transcription termination involves the release of the RNA transcript and polymerase from the DNA (PubMed:27193682, PubMed:30190596, PubMed:9852112). Forms Pol II active center together with the largest subunit POLR2A/RPB1. Appends one nucleotide at a time to the 3' end of the nascent RNA, with POLR2A/RPB1 most likely contributing a Mg(2+)-coordinating DxDGD motif and POLR2B/RPB2 participating in the coordination of a second Mg(2+) ion and providing lysine residues believed to facilitate Watson-Crick base pairing between the incoming nucleotide and template base. Typically, Mg(2+) ions direct a 5' nucleoside triphosphate to form a phosphodiester bond with the 3' hydroxyl of the preceding nucleotide of the nascent RNA, with the elimination of pyrophosphate. The reversible pyrophosphorolysis can occur at high pyrophosphate concentrations (By similarity) (PubMed:30190596, PubMed:9852112). Can proofread the nascent RNA transcript by means of a 3' -&gt; 5' exonuclease activity. If a ribonucleotide is mis-incorporated, backtracks along the template DNA and cleaves the phosphodiester bond releasing the mis-incorporated 5'-ribonucleotide (By similarity) (PubMed:8381534).</text>
</comment>
<comment type="function">
    <text evidence="4">RNA-dependent RNA polymerase that catalyzes the extension of a non-coding RNA (ncRNA) at the 3'-end using the four ribonucleoside triphosphates as substrates. An internal ncRNA sequence near the 3'-end serves as a template in a single-round Pol II-mediated RNA polymerization reaction. May decrease the stability of ncRNAs that repress Pol II-mediated gene transcription.</text>
</comment>
<comment type="catalytic activity">
    <reaction evidence="5 6 8">
        <text>RNA(n) + a ribonucleoside 5'-triphosphate = RNA(n+1) + diphosphate</text>
        <dbReference type="Rhea" id="RHEA:21248"/>
        <dbReference type="Rhea" id="RHEA-COMP:14527"/>
        <dbReference type="Rhea" id="RHEA-COMP:17342"/>
        <dbReference type="ChEBI" id="CHEBI:33019"/>
        <dbReference type="ChEBI" id="CHEBI:61557"/>
        <dbReference type="ChEBI" id="CHEBI:140395"/>
        <dbReference type="EC" id="2.7.7.6"/>
    </reaction>
    <physiologicalReaction direction="left-to-right" evidence="5 6 8">
        <dbReference type="Rhea" id="RHEA:21249"/>
    </physiologicalReaction>
    <physiologicalReaction direction="right-to-left" evidence="10">
        <dbReference type="Rhea" id="RHEA:21250"/>
    </physiologicalReaction>
</comment>
<comment type="catalytic activity">
    <reaction evidence="4">
        <text>RNA(n) + a ribonucleoside 5'-triphosphate = RNA(n+1) + diphosphate</text>
        <dbReference type="Rhea" id="RHEA:21248"/>
        <dbReference type="Rhea" id="RHEA-COMP:14527"/>
        <dbReference type="Rhea" id="RHEA-COMP:17342"/>
        <dbReference type="ChEBI" id="CHEBI:33019"/>
        <dbReference type="ChEBI" id="CHEBI:61557"/>
        <dbReference type="ChEBI" id="CHEBI:140395"/>
        <dbReference type="EC" id="2.7.7.48"/>
    </reaction>
    <physiologicalReaction direction="left-to-right" evidence="4">
        <dbReference type="Rhea" id="RHEA:21249"/>
    </physiologicalReaction>
</comment>
<comment type="catalytic activity">
    <reaction evidence="7">
        <text>a 3'-end ribonucleotidyl-ribonucleotide-RNA + H2O = a 3'-end ribonucleotide-RNA + a ribonucleoside 5'-phosphate + H(+)</text>
        <dbReference type="Rhea" id="RHEA:77763"/>
        <dbReference type="Rhea" id="RHEA-COMP:17428"/>
        <dbReference type="Rhea" id="RHEA-COMP:18982"/>
        <dbReference type="ChEBI" id="CHEBI:15377"/>
        <dbReference type="ChEBI" id="CHEBI:15378"/>
        <dbReference type="ChEBI" id="CHEBI:58043"/>
        <dbReference type="ChEBI" id="CHEBI:74896"/>
        <dbReference type="ChEBI" id="CHEBI:197502"/>
    </reaction>
    <physiologicalReaction direction="left-to-right" evidence="7">
        <dbReference type="Rhea" id="RHEA:77764"/>
    </physiologicalReaction>
</comment>
<comment type="cofactor">
    <cofactor evidence="5">
        <name>Mg(2+)</name>
        <dbReference type="ChEBI" id="CHEBI:18420"/>
    </cofactor>
    <text evidence="5">Two Mg(2+) ions are coordinated by both the catalytic residues and the nucleic acid substrate to enhance substrate recognition and catalytic efficiency.</text>
</comment>
<comment type="activity regulation">
    <text evidence="7">Pol II enzymatic activities are inhibited by alpha-amanitin. 3'-&gt;5' exonuclease activity is stimulated by TFIIS, whereas pyrophosphorolysis is enhanced by TFIIF.</text>
</comment>
<comment type="subunit">
    <text evidence="2 3 5 6 8">Component of the RNA polymerase II (Pol II) core complex consisting of 12 subunits: a ten-subunit catalytic core composed of POLR2A/RPB1, POLR2B/RPB2, POLR2C/RPB3, POLR2I/RPB9, POLR2J/RPB11, POLR2E/RPABC1, POLR2F/RPABC2, POLR2H/RPABC3, POLR2K/RPABC4 and POLR2L/RPABC5 and a mobile stalk composed of two subunits POLR2D/RPB4 and POLR2G/RPB7, protruding from the core and functioning primarily in transcription initiation. Part of Pol II(G) complex, in which Pol II core associates with an additional subunit POLR2M; unlike conventional Pol II, Pol II(G) functions as a transcriptional repressor. Part of TBP-based Pol II pre-initiation complex (PIC), in which Pol II core assembles with general transcription factors and other specific initiation factors including GTF2E1, GTF2E2, GTF2F1, GTF2F2, TCEA1, ERCC2, ERCC3, GTF2H2, GTF2H3, GTF2H4, GTF2H5, GTF2A1, GTF2A2, GTF2B and TBP; this large multi-subunit PIC complex mediates DNA unwinding and targets Pol II core to the transcription start site where the first phosphodiester bond forms (PubMed:27193682, PubMed:30190596, PubMed:9852112). Interacts with WDR82 (PubMed:14992727, PubMed:17998332). Interacts with MEN1 (PubMed:14992727).</text>
</comment>
<comment type="subcellular location">
    <subcellularLocation>
        <location evidence="8">Nucleus</location>
    </subcellularLocation>
</comment>
<comment type="similarity">
    <text evidence="9">Belongs to the RNA polymerase beta chain family.</text>
</comment>
<keyword id="KW-0002">3D-structure</keyword>
<keyword id="KW-0240">DNA-directed RNA polymerase</keyword>
<keyword id="KW-0378">Hydrolase</keyword>
<keyword id="KW-0460">Magnesium</keyword>
<keyword id="KW-0479">Metal-binding</keyword>
<keyword id="KW-0488">Methylation</keyword>
<keyword id="KW-0548">Nucleotidyltransferase</keyword>
<keyword id="KW-0539">Nucleus</keyword>
<keyword id="KW-0597">Phosphoprotein</keyword>
<keyword id="KW-1267">Proteomics identification</keyword>
<keyword id="KW-1185">Reference proteome</keyword>
<keyword id="KW-0696">RNA-directed RNA polymerase</keyword>
<keyword id="KW-0804">Transcription</keyword>
<keyword id="KW-0808">Transferase</keyword>
<keyword id="KW-0862">Zinc</keyword>
<keyword id="KW-0863">Zinc-finger</keyword>
<name>RPB2_HUMAN</name>
<gene>
    <name evidence="11" type="primary">POLR2B</name>
</gene>
<proteinExistence type="evidence at protein level"/>
<organism>
    <name type="scientific">Homo sapiens</name>
    <name type="common">Human</name>
    <dbReference type="NCBI Taxonomy" id="9606"/>
    <lineage>
        <taxon>Eukaryota</taxon>
        <taxon>Metazoa</taxon>
        <taxon>Chordata</taxon>
        <taxon>Craniata</taxon>
        <taxon>Vertebrata</taxon>
        <taxon>Euteleostomi</taxon>
        <taxon>Mammalia</taxon>
        <taxon>Eutheria</taxon>
        <taxon>Euarchontoglires</taxon>
        <taxon>Primates</taxon>
        <taxon>Haplorrhini</taxon>
        <taxon>Catarrhini</taxon>
        <taxon>Hominidae</taxon>
        <taxon>Homo</taxon>
    </lineage>
</organism>
<sequence length="1174" mass="133897">MYDADEDMQYDEDDDEITPDLWQEACWIVISSYFDEKGLVRQQLDSFDEFIQMSVQRIVEDAPPIDLQAEAQHASGEVEEPPRYLLKFEQIYLSKPTHWERDGAPSPMMPNEARLRNLTYSAPLYVDITKTVIKEGEEQLQTQHQKTFIGKIPIMLRSTYCLLNGLTDRDLCELNECPLDPGGYFIINGSEKVLIAQEKMATNTVYVFAKKDSKYAYTGECRSCLENSSRPTSTIWVSMLARGGQGAKKSAIGQRIVATLPYIKQEVPIIIVFRALGFVSDRDILEHIIYDFEDPEMMEMVKPSLDEAFVIQEQNVALNFIGSRGAKPGVTKEKRIKYAKEVLQKEMLPHVGVSDFCETKKAYFLGYMVHRLLLAALGRRELDDRDHYGNKRLDLAGPLLAFLFRGMFKNLLKEVRIYAQKFIDRGKDFNLELAIKTRIISDGLKYSLATGNWGDQKKAHQARAGVSQVLNRLTFASTLSHLRRLNSPIGRDGKLAKPRQLHNTLWGMVCPAETPEGHAVGLVKNLALMAYISVGSQPSPILEFLEEWSMENLEEISPAAIADATKIFVNGCWVGIHKDPEQLMNTLRKLRRQMDIIVSEVSMIRDIREREIRIYTDAGRICRPLLIVEKQKLLLKKRHIDQLKEREYNNYSWQDLVASGVVEYIDTLEEETVMLAMTPDDLQEKEVAYCSTYTHCEIHPSMILGVCASIIPFPDHNQSPRNTYQSAMGKQAMGVYITNFHVRMDTLAHVLYYPQKPLVTTRSMEYLRFRELPAGINSIVAIASYTGYNQEDSVIMNRSAVDRGFFRSVFYRSYKEQESKKGFDQEEVFEKPTRETCQGMRHAIYDKLDDDGLIAPGVRVSGDDVIIGKTVTLPENEDELESTNRRYTKRDCSTFLRTSETGIVDQVMVTLNQEGYKFCKIRVRSVRIPQIGDKFASRHGQKGTCGIQYRQEDMPFTCEGITPDIIINPHAIPSRMTIGHLIECLQGKVSANKGEIGDATPFNDAVNVQKISNLLSDYGYHLRGNEVLYNGFTGRKITSQIFIGPTYYQRLKHMVDDKIHSRARGPIQILNRQPMEGRSRDGGLRFGEMERDCQIAHGAAQFLRERLFEASDPYQVHVCNLCGIMAIANTRTHTYECRGCRNKTQISLVRMPYACKLLFQELMSMSIAPRMMSV</sequence>
<evidence type="ECO:0000250" key="1">
    <source>
        <dbReference type="UniProtKB" id="A5PJW8"/>
    </source>
</evidence>
<evidence type="ECO:0000269" key="2">
    <source>
    </source>
</evidence>
<evidence type="ECO:0000269" key="3">
    <source>
    </source>
</evidence>
<evidence type="ECO:0000269" key="4">
    <source>
    </source>
</evidence>
<evidence type="ECO:0000269" key="5">
    <source>
    </source>
</evidence>
<evidence type="ECO:0000269" key="6">
    <source>
    </source>
</evidence>
<evidence type="ECO:0000269" key="7">
    <source>
    </source>
</evidence>
<evidence type="ECO:0000269" key="8">
    <source>
    </source>
</evidence>
<evidence type="ECO:0000305" key="9"/>
<evidence type="ECO:0000305" key="10">
    <source>
    </source>
</evidence>
<evidence type="ECO:0000312" key="11">
    <source>
        <dbReference type="HGNC" id="HGNC:9188"/>
    </source>
</evidence>
<evidence type="ECO:0007744" key="12">
    <source>
        <dbReference type="PDB" id="5IY6"/>
    </source>
</evidence>
<evidence type="ECO:0007744" key="13">
    <source>
        <dbReference type="PDB" id="5IYD"/>
    </source>
</evidence>
<evidence type="ECO:0007744" key="14">
    <source>
    </source>
</evidence>
<evidence type="ECO:0007744" key="15">
    <source>
    </source>
</evidence>
<accession>P30876</accession>
<accession>A8K1A8</accession>
<accession>Q8IZ61</accession>
<reference key="1">
    <citation type="journal article" date="1992" name="J. Mol. Biol.">
        <title>Primary structure of the second largest subunit of human RNA polymerase II (or B).</title>
        <authorList>
            <person name="Acker J."/>
            <person name="Wintzerith M."/>
            <person name="Vigneron M."/>
            <person name="Kedinger C."/>
        </authorList>
    </citation>
    <scope>NUCLEOTIDE SEQUENCE [MRNA]</scope>
</reference>
<reference key="2">
    <citation type="journal article" date="2004" name="Nat. Genet.">
        <title>Complete sequencing and characterization of 21,243 full-length human cDNAs.</title>
        <authorList>
            <person name="Ota T."/>
            <person name="Suzuki Y."/>
            <person name="Nishikawa T."/>
            <person name="Otsuki T."/>
            <person name="Sugiyama T."/>
            <person name="Irie R."/>
            <person name="Wakamatsu A."/>
            <person name="Hayashi K."/>
            <person name="Sato H."/>
            <person name="Nagai K."/>
            <person name="Kimura K."/>
            <person name="Makita H."/>
            <person name="Sekine M."/>
            <person name="Obayashi M."/>
            <person name="Nishi T."/>
            <person name="Shibahara T."/>
            <person name="Tanaka T."/>
            <person name="Ishii S."/>
            <person name="Yamamoto J."/>
            <person name="Saito K."/>
            <person name="Kawai Y."/>
            <person name="Isono Y."/>
            <person name="Nakamura Y."/>
            <person name="Nagahari K."/>
            <person name="Murakami K."/>
            <person name="Yasuda T."/>
            <person name="Iwayanagi T."/>
            <person name="Wagatsuma M."/>
            <person name="Shiratori A."/>
            <person name="Sudo H."/>
            <person name="Hosoiri T."/>
            <person name="Kaku Y."/>
            <person name="Kodaira H."/>
            <person name="Kondo H."/>
            <person name="Sugawara M."/>
            <person name="Takahashi M."/>
            <person name="Kanda K."/>
            <person name="Yokoi T."/>
            <person name="Furuya T."/>
            <person name="Kikkawa E."/>
            <person name="Omura Y."/>
            <person name="Abe K."/>
            <person name="Kamihara K."/>
            <person name="Katsuta N."/>
            <person name="Sato K."/>
            <person name="Tanikawa M."/>
            <person name="Yamazaki M."/>
            <person name="Ninomiya K."/>
            <person name="Ishibashi T."/>
            <person name="Yamashita H."/>
            <person name="Murakawa K."/>
            <person name="Fujimori K."/>
            <person name="Tanai H."/>
            <person name="Kimata M."/>
            <person name="Watanabe M."/>
            <person name="Hiraoka S."/>
            <person name="Chiba Y."/>
            <person name="Ishida S."/>
            <person name="Ono Y."/>
            <person name="Takiguchi S."/>
            <person name="Watanabe S."/>
            <person name="Yosida M."/>
            <person name="Hotuta T."/>
            <person name="Kusano J."/>
            <person name="Kanehori K."/>
            <person name="Takahashi-Fujii A."/>
            <person name="Hara H."/>
            <person name="Tanase T.-O."/>
            <person name="Nomura Y."/>
            <person name="Togiya S."/>
            <person name="Komai F."/>
            <person name="Hara R."/>
            <person name="Takeuchi K."/>
            <person name="Arita M."/>
            <person name="Imose N."/>
            <person name="Musashino K."/>
            <person name="Yuuki H."/>
            <person name="Oshima A."/>
            <person name="Sasaki N."/>
            <person name="Aotsuka S."/>
            <person name="Yoshikawa Y."/>
            <person name="Matsunawa H."/>
            <person name="Ichihara T."/>
            <person name="Shiohata N."/>
            <person name="Sano S."/>
            <person name="Moriya S."/>
            <person name="Momiyama H."/>
            <person name="Satoh N."/>
            <person name="Takami S."/>
            <person name="Terashima Y."/>
            <person name="Suzuki O."/>
            <person name="Nakagawa S."/>
            <person name="Senoh A."/>
            <person name="Mizoguchi H."/>
            <person name="Goto Y."/>
            <person name="Shimizu F."/>
            <person name="Wakebe H."/>
            <person name="Hishigaki H."/>
            <person name="Watanabe T."/>
            <person name="Sugiyama A."/>
            <person name="Takemoto M."/>
            <person name="Kawakami B."/>
            <person name="Yamazaki M."/>
            <person name="Watanabe K."/>
            <person name="Kumagai A."/>
            <person name="Itakura S."/>
            <person name="Fukuzumi Y."/>
            <person name="Fujimori Y."/>
            <person name="Komiyama M."/>
            <person name="Tashiro H."/>
            <person name="Tanigami A."/>
            <person name="Fujiwara T."/>
            <person name="Ono T."/>
            <person name="Yamada K."/>
            <person name="Fujii Y."/>
            <person name="Ozaki K."/>
            <person name="Hirao M."/>
            <person name="Ohmori Y."/>
            <person name="Kawabata A."/>
            <person name="Hikiji T."/>
            <person name="Kobatake N."/>
            <person name="Inagaki H."/>
            <person name="Ikema Y."/>
            <person name="Okamoto S."/>
            <person name="Okitani R."/>
            <person name="Kawakami T."/>
            <person name="Noguchi S."/>
            <person name="Itoh T."/>
            <person name="Shigeta K."/>
            <person name="Senba T."/>
            <person name="Matsumura K."/>
            <person name="Nakajima Y."/>
            <person name="Mizuno T."/>
            <person name="Morinaga M."/>
            <person name="Sasaki M."/>
            <person name="Togashi T."/>
            <person name="Oyama M."/>
            <person name="Hata H."/>
            <person name="Watanabe M."/>
            <person name="Komatsu T."/>
            <person name="Mizushima-Sugano J."/>
            <person name="Satoh T."/>
            <person name="Shirai Y."/>
            <person name="Takahashi Y."/>
            <person name="Nakagawa K."/>
            <person name="Okumura K."/>
            <person name="Nagase T."/>
            <person name="Nomura N."/>
            <person name="Kikuchi H."/>
            <person name="Masuho Y."/>
            <person name="Yamashita R."/>
            <person name="Nakai K."/>
            <person name="Yada T."/>
            <person name="Nakamura Y."/>
            <person name="Ohara O."/>
            <person name="Isogai T."/>
            <person name="Sugano S."/>
        </authorList>
    </citation>
    <scope>NUCLEOTIDE SEQUENCE [LARGE SCALE MRNA]</scope>
    <source>
        <tissue>Brain</tissue>
    </source>
</reference>
<reference key="3">
    <citation type="submission" date="2005-07" db="EMBL/GenBank/DDBJ databases">
        <authorList>
            <person name="Mural R.J."/>
            <person name="Istrail S."/>
            <person name="Sutton G.G."/>
            <person name="Florea L."/>
            <person name="Halpern A.L."/>
            <person name="Mobarry C.M."/>
            <person name="Lippert R."/>
            <person name="Walenz B."/>
            <person name="Shatkay H."/>
            <person name="Dew I."/>
            <person name="Miller J.R."/>
            <person name="Flanigan M.J."/>
            <person name="Edwards N.J."/>
            <person name="Bolanos R."/>
            <person name="Fasulo D."/>
            <person name="Halldorsson B.V."/>
            <person name="Hannenhalli S."/>
            <person name="Turner R."/>
            <person name="Yooseph S."/>
            <person name="Lu F."/>
            <person name="Nusskern D.R."/>
            <person name="Shue B.C."/>
            <person name="Zheng X.H."/>
            <person name="Zhong F."/>
            <person name="Delcher A.L."/>
            <person name="Huson D.H."/>
            <person name="Kravitz S.A."/>
            <person name="Mouchard L."/>
            <person name="Reinert K."/>
            <person name="Remington K.A."/>
            <person name="Clark A.G."/>
            <person name="Waterman M.S."/>
            <person name="Eichler E.E."/>
            <person name="Adams M.D."/>
            <person name="Hunkapiller M.W."/>
            <person name="Myers E.W."/>
            <person name="Venter J.C."/>
        </authorList>
    </citation>
    <scope>NUCLEOTIDE SEQUENCE [LARGE SCALE GENOMIC DNA]</scope>
</reference>
<reference key="4">
    <citation type="journal article" date="2004" name="Genome Res.">
        <title>The status, quality, and expansion of the NIH full-length cDNA project: the Mammalian Gene Collection (MGC).</title>
        <authorList>
            <consortium name="The MGC Project Team"/>
        </authorList>
    </citation>
    <scope>NUCLEOTIDE SEQUENCE [LARGE SCALE MRNA]</scope>
    <source>
        <tissue>Skin</tissue>
    </source>
</reference>
<reference key="5">
    <citation type="journal article" date="1997" name="Genome Res.">
        <title>Large-scale concatenation cDNA sequencing.</title>
        <authorList>
            <person name="Yu W."/>
            <person name="Andersson B."/>
            <person name="Worley K.C."/>
            <person name="Muzny D.M."/>
            <person name="Ding Y."/>
            <person name="Liu W."/>
            <person name="Ricafrente J.Y."/>
            <person name="Wentland M.A."/>
            <person name="Lennon G."/>
            <person name="Gibbs R.A."/>
        </authorList>
    </citation>
    <scope>NUCLEOTIDE SEQUENCE [LARGE SCALE MRNA] OF 699-1174</scope>
    <source>
        <tissue>Brain</tissue>
    </source>
</reference>
<reference key="6">
    <citation type="journal article" date="1993" name="Proc. Natl. Acad. Sci. U.S.A.">
        <title>Identification of a 3'--&gt;5' exonuclease activity associated with human RNA polymerase II.</title>
        <authorList>
            <person name="Wang D."/>
            <person name="Hawley D.K."/>
        </authorList>
    </citation>
    <scope>FUNCTION</scope>
    <scope>CATALYTIC ACTIVITY</scope>
    <scope>ACTIVITY REGULATION</scope>
</reference>
<reference key="7">
    <citation type="journal article" date="1998" name="J. Biol. Chem.">
        <title>Immunoaffinity purification and functional characterization of human transcription factor IIH and RNA polymerase II from clonal cell lines that conditionally express epitope-tagged subunits of the multiprotein complexes.</title>
        <authorList>
            <person name="Kershnar E."/>
            <person name="Wu S.-Y."/>
            <person name="Chiang C.-M."/>
        </authorList>
    </citation>
    <scope>FUNCTION</scope>
    <scope>CATALYTIC ACTIVITY</scope>
    <scope>IDENTIFICATION IN THE RNA POLYMERASE II CORE-COMPLEX</scope>
    <scope>SUBCELLULAR LOCATION</scope>
</reference>
<reference key="8">
    <citation type="journal article" date="2004" name="Mol. Cell">
        <title>Menin associates with a trithorax family histone methyltransferase complex and with the hoxc8 locus.</title>
        <authorList>
            <person name="Hughes C.M."/>
            <person name="Rozenblatt-Rosen O."/>
            <person name="Milne T.A."/>
            <person name="Copeland T.D."/>
            <person name="Levine S.S."/>
            <person name="Lee J.C."/>
            <person name="Hayes D.N."/>
            <person name="Shanmugam K.S."/>
            <person name="Bhattacharjee A."/>
            <person name="Biondi C.A."/>
            <person name="Kay G.F."/>
            <person name="Hayward N.K."/>
            <person name="Hess J.L."/>
            <person name="Meyerson M."/>
        </authorList>
    </citation>
    <scope>INTERACTION WITH MEN1</scope>
</reference>
<reference key="9">
    <citation type="journal article" date="2008" name="Mol. Cell. Biol.">
        <title>Wdr82 is a C-terminal domain-binding protein that recruits the Setd1A Histone H3-Lys4 methyltransferase complex to transcription start sites of transcribed human genes.</title>
        <authorList>
            <person name="Lee J.H."/>
            <person name="Skalnik D.G."/>
        </authorList>
    </citation>
    <scope>INTERACTION WITH WDR82</scope>
</reference>
<reference key="10">
    <citation type="journal article" date="2011" name="BMC Syst. Biol.">
        <title>Initial characterization of the human central proteome.</title>
        <authorList>
            <person name="Burkard T.R."/>
            <person name="Planyavsky M."/>
            <person name="Kaupe I."/>
            <person name="Breitwieser F.P."/>
            <person name="Buerckstuemmer T."/>
            <person name="Bennett K.L."/>
            <person name="Superti-Furga G."/>
            <person name="Colinge J."/>
        </authorList>
    </citation>
    <scope>IDENTIFICATION BY MASS SPECTROMETRY [LARGE SCALE ANALYSIS]</scope>
</reference>
<reference key="11">
    <citation type="journal article" date="2013" name="EMBO J.">
        <title>RNA polymerase II acts as an RNA-dependent RNA polymerase to extend and destabilize a non-coding RNA.</title>
        <authorList>
            <person name="Wagner S.D."/>
            <person name="Yakovchuk P."/>
            <person name="Gilman B."/>
            <person name="Ponicsan S.L."/>
            <person name="Drullinger L.F."/>
            <person name="Kugel J.F."/>
            <person name="Goodrich J.A."/>
        </authorList>
    </citation>
    <scope>FUNCTION</scope>
    <scope>CATALYTIC ACTIVITY</scope>
</reference>
<reference key="12">
    <citation type="journal article" date="2013" name="J. Proteome Res.">
        <title>Toward a comprehensive characterization of a human cancer cell phosphoproteome.</title>
        <authorList>
            <person name="Zhou H."/>
            <person name="Di Palma S."/>
            <person name="Preisinger C."/>
            <person name="Peng M."/>
            <person name="Polat A.N."/>
            <person name="Heck A.J."/>
            <person name="Mohammed S."/>
        </authorList>
    </citation>
    <scope>PHOSPHORYLATION [LARGE SCALE ANALYSIS] AT SER-937</scope>
    <scope>IDENTIFICATION BY MASS SPECTROMETRY [LARGE SCALE ANALYSIS]</scope>
    <source>
        <tissue>Erythroleukemia</tissue>
    </source>
</reference>
<reference key="13">
    <citation type="journal article" date="2014" name="J. Proteomics">
        <title>An enzyme assisted RP-RPLC approach for in-depth analysis of human liver phosphoproteome.</title>
        <authorList>
            <person name="Bian Y."/>
            <person name="Song C."/>
            <person name="Cheng K."/>
            <person name="Dong M."/>
            <person name="Wang F."/>
            <person name="Huang J."/>
            <person name="Sun D."/>
            <person name="Wang L."/>
            <person name="Ye M."/>
            <person name="Zou H."/>
        </authorList>
    </citation>
    <scope>IDENTIFICATION BY MASS SPECTROMETRY [LARGE SCALE ANALYSIS]</scope>
    <source>
        <tissue>Liver</tissue>
    </source>
</reference>
<reference key="14">
    <citation type="journal article" date="2014" name="Mol. Cell. Proteomics">
        <title>Immunoaffinity enrichment and mass spectrometry analysis of protein methylation.</title>
        <authorList>
            <person name="Guo A."/>
            <person name="Gu H."/>
            <person name="Zhou J."/>
            <person name="Mulhern D."/>
            <person name="Wang Y."/>
            <person name="Lee K.A."/>
            <person name="Yang V."/>
            <person name="Aguiar M."/>
            <person name="Kornhauser J."/>
            <person name="Jia X."/>
            <person name="Ren J."/>
            <person name="Beausoleil S.A."/>
            <person name="Silva J.C."/>
            <person name="Vemulapalli V."/>
            <person name="Bedford M.T."/>
            <person name="Comb M.J."/>
        </authorList>
    </citation>
    <scope>METHYLATION [LARGE SCALE ANALYSIS] AT LYS-1052</scope>
    <scope>IDENTIFICATION BY MASS SPECTROMETRY [LARGE SCALE ANALYSIS]</scope>
    <source>
        <tissue>Colon carcinoma</tissue>
    </source>
</reference>
<reference key="15">
    <citation type="journal article" date="2016" name="Nature">
        <title>Near-atomic resolution visualization of human transcription promoter opening.</title>
        <authorList>
            <person name="He Y."/>
            <person name="Yan C."/>
            <person name="Fang J."/>
            <person name="Inouye C."/>
            <person name="Tjian R."/>
            <person name="Ivanov I."/>
            <person name="Nogales E."/>
        </authorList>
    </citation>
    <scope>STRUCTURE BY ELECTRON MICROSCOPY (3.90 ANGSTROMS) IN COMPLEX WITH ZN(2+); MG(2+) AND PROMOTER DNA</scope>
    <scope>FUNCTION</scope>
    <scope>CATALYTIC ACTIVITY</scope>
    <scope>COFACTOR</scope>
    <scope>SUBUNIT</scope>
</reference>
<reference key="16">
    <citation type="journal article" date="2018" name="Nat. Struct. Mol. Biol.">
        <title>Architecture of Pol II(G) and molecular mechanism of transcription regulation by Gdown1.</title>
        <authorList>
            <person name="Jishage M."/>
            <person name="Yu X."/>
            <person name="Shi Y."/>
            <person name="Ganesan S.J."/>
            <person name="Chen W.Y."/>
            <person name="Sali A."/>
            <person name="Chait B.T."/>
            <person name="Asturias F.J."/>
            <person name="Roeder R.G."/>
        </authorList>
    </citation>
    <scope>STRUCTURE BY ELECTRON MICROSCOPY (3.90 ANGSTROMS)</scope>
    <scope>FUNCTION</scope>
    <scope>CATALYTIC ACTIVITY</scope>
    <scope>SUBUNIT</scope>
</reference>
<dbReference type="EC" id="2.7.7.6" evidence="5 6 8"/>
<dbReference type="EC" id="3.1.13.-" evidence="7"/>
<dbReference type="EC" id="2.7.7.48" evidence="4"/>
<dbReference type="EMBL" id="X63563">
    <property type="protein sequence ID" value="CAA45124.1"/>
    <property type="molecule type" value="mRNA"/>
</dbReference>
<dbReference type="EMBL" id="AK289823">
    <property type="protein sequence ID" value="BAF82512.1"/>
    <property type="molecule type" value="mRNA"/>
</dbReference>
<dbReference type="EMBL" id="CH471057">
    <property type="protein sequence ID" value="EAX05519.1"/>
    <property type="molecule type" value="Genomic_DNA"/>
</dbReference>
<dbReference type="EMBL" id="BC023503">
    <property type="protein sequence ID" value="AAH23503.2"/>
    <property type="molecule type" value="mRNA"/>
</dbReference>
<dbReference type="EMBL" id="AF055028">
    <property type="protein sequence ID" value="AAC09367.1"/>
    <property type="molecule type" value="mRNA"/>
</dbReference>
<dbReference type="CCDS" id="CCDS3511.1"/>
<dbReference type="PIR" id="S28976">
    <property type="entry name" value="S28976"/>
</dbReference>
<dbReference type="RefSeq" id="NP_000929.1">
    <property type="nucleotide sequence ID" value="NM_000938.3"/>
</dbReference>
<dbReference type="RefSeq" id="NP_001290197.1">
    <property type="nucleotide sequence ID" value="NM_001303268.1"/>
</dbReference>
<dbReference type="RefSeq" id="NP_001290198.1">
    <property type="nucleotide sequence ID" value="NM_001303269.1"/>
</dbReference>
<dbReference type="PDB" id="5IY6">
    <property type="method" value="EM"/>
    <property type="resolution" value="7.20 A"/>
    <property type="chains" value="B=1-1174"/>
</dbReference>
<dbReference type="PDB" id="5IY7">
    <property type="method" value="EM"/>
    <property type="resolution" value="8.60 A"/>
    <property type="chains" value="B=1-1174"/>
</dbReference>
<dbReference type="PDB" id="5IY8">
    <property type="method" value="EM"/>
    <property type="resolution" value="7.90 A"/>
    <property type="chains" value="B=1-1174"/>
</dbReference>
<dbReference type="PDB" id="5IY9">
    <property type="method" value="EM"/>
    <property type="resolution" value="6.30 A"/>
    <property type="chains" value="B=1-1174"/>
</dbReference>
<dbReference type="PDB" id="5IYA">
    <property type="method" value="EM"/>
    <property type="resolution" value="5.40 A"/>
    <property type="chains" value="B=1-1174"/>
</dbReference>
<dbReference type="PDB" id="5IYB">
    <property type="method" value="EM"/>
    <property type="resolution" value="3.90 A"/>
    <property type="chains" value="B=1-1174"/>
</dbReference>
<dbReference type="PDB" id="5IYC">
    <property type="method" value="EM"/>
    <property type="resolution" value="3.90 A"/>
    <property type="chains" value="B=1-1174"/>
</dbReference>
<dbReference type="PDB" id="5IYD">
    <property type="method" value="EM"/>
    <property type="resolution" value="3.90 A"/>
    <property type="chains" value="B=1-1174"/>
</dbReference>
<dbReference type="PDB" id="6DRD">
    <property type="method" value="EM"/>
    <property type="resolution" value="3.90 A"/>
    <property type="chains" value="B=1-1174"/>
</dbReference>
<dbReference type="PDB" id="6O9L">
    <property type="method" value="EM"/>
    <property type="resolution" value="7.20 A"/>
    <property type="chains" value="B=1-1174"/>
</dbReference>
<dbReference type="PDB" id="6XRE">
    <property type="method" value="EM"/>
    <property type="resolution" value="4.60 A"/>
    <property type="chains" value="B=1-1174"/>
</dbReference>
<dbReference type="PDB" id="7LBM">
    <property type="method" value="EM"/>
    <property type="resolution" value="4.80 A"/>
    <property type="chains" value="B=1-1174"/>
</dbReference>
<dbReference type="PDB" id="9EHZ">
    <property type="method" value="EM"/>
    <property type="resolution" value="2.60 A"/>
    <property type="chains" value="B=1-1174"/>
</dbReference>
<dbReference type="PDB" id="9EI1">
    <property type="method" value="EM"/>
    <property type="resolution" value="3.20 A"/>
    <property type="chains" value="B=1-1174"/>
</dbReference>
<dbReference type="PDB" id="9EI3">
    <property type="method" value="EM"/>
    <property type="resolution" value="3.20 A"/>
    <property type="chains" value="B=1-1174"/>
</dbReference>
<dbReference type="PDB" id="9EI4">
    <property type="method" value="EM"/>
    <property type="resolution" value="3.70 A"/>
    <property type="chains" value="B=1-1174"/>
</dbReference>
<dbReference type="PDBsum" id="5IY6"/>
<dbReference type="PDBsum" id="5IY7"/>
<dbReference type="PDBsum" id="5IY8"/>
<dbReference type="PDBsum" id="5IY9"/>
<dbReference type="PDBsum" id="5IYA"/>
<dbReference type="PDBsum" id="5IYB"/>
<dbReference type="PDBsum" id="5IYC"/>
<dbReference type="PDBsum" id="5IYD"/>
<dbReference type="PDBsum" id="6DRD"/>
<dbReference type="PDBsum" id="6O9L"/>
<dbReference type="PDBsum" id="6XRE"/>
<dbReference type="PDBsum" id="7LBM"/>
<dbReference type="PDBsum" id="9EHZ"/>
<dbReference type="PDBsum" id="9EI1"/>
<dbReference type="PDBsum" id="9EI3"/>
<dbReference type="PDBsum" id="9EI4"/>
<dbReference type="EMDB" id="EMD-22294"/>
<dbReference type="EMDB" id="EMD-23255"/>
<dbReference type="EMDB" id="EMD-48071"/>
<dbReference type="EMDB" id="EMD-48073"/>
<dbReference type="EMDB" id="EMD-48075"/>
<dbReference type="EMDB" id="EMD-48076"/>
<dbReference type="EMDB" id="EMD-7997"/>
<dbReference type="EMDB" id="EMD-8132"/>
<dbReference type="EMDB" id="EMD-8133"/>
<dbReference type="EMDB" id="EMD-8134"/>
<dbReference type="EMDB" id="EMD-8135"/>
<dbReference type="EMDB" id="EMD-8136"/>
<dbReference type="EMDB" id="EMD-8137"/>
<dbReference type="EMDB" id="EMD-8138"/>
<dbReference type="SMR" id="P30876"/>
<dbReference type="BioGRID" id="111427">
    <property type="interactions" value="383"/>
</dbReference>
<dbReference type="ComplexPortal" id="CPX-2387">
    <property type="entry name" value="DNA-directed RNA polymerase II complex, Pol II(G) variant"/>
</dbReference>
<dbReference type="ComplexPortal" id="CPX-7481">
    <property type="entry name" value="DNA-directed RNA polymerase II complex"/>
</dbReference>
<dbReference type="CORUM" id="P30876"/>
<dbReference type="DIP" id="DIP-32910N"/>
<dbReference type="FunCoup" id="P30876">
    <property type="interactions" value="3422"/>
</dbReference>
<dbReference type="IntAct" id="P30876">
    <property type="interactions" value="188"/>
</dbReference>
<dbReference type="MINT" id="P30876"/>
<dbReference type="STRING" id="9606.ENSP00000370625"/>
<dbReference type="GlyCosmos" id="P30876">
    <property type="glycosylation" value="1 site, 1 glycan"/>
</dbReference>
<dbReference type="GlyGen" id="P30876">
    <property type="glycosylation" value="1 site, 1 O-linked glycan (1 site)"/>
</dbReference>
<dbReference type="iPTMnet" id="P30876"/>
<dbReference type="PhosphoSitePlus" id="P30876"/>
<dbReference type="SwissPalm" id="P30876"/>
<dbReference type="BioMuta" id="POLR2B"/>
<dbReference type="DMDM" id="401012"/>
<dbReference type="jPOST" id="P30876"/>
<dbReference type="MassIVE" id="P30876"/>
<dbReference type="PaxDb" id="9606-ENSP00000370625"/>
<dbReference type="PeptideAtlas" id="P30876"/>
<dbReference type="ProteomicsDB" id="54745"/>
<dbReference type="Pumba" id="P30876"/>
<dbReference type="Antibodypedia" id="12545">
    <property type="antibodies" value="186 antibodies from 28 providers"/>
</dbReference>
<dbReference type="DNASU" id="5431"/>
<dbReference type="Ensembl" id="ENST00000314595.6">
    <property type="protein sequence ID" value="ENSP00000312735.5"/>
    <property type="gene ID" value="ENSG00000047315.17"/>
</dbReference>
<dbReference type="Ensembl" id="ENST00000381227.5">
    <property type="protein sequence ID" value="ENSP00000370625.1"/>
    <property type="gene ID" value="ENSG00000047315.17"/>
</dbReference>
<dbReference type="GeneID" id="5431"/>
<dbReference type="KEGG" id="hsa:5431"/>
<dbReference type="MANE-Select" id="ENST00000314595.6">
    <property type="protein sequence ID" value="ENSP00000312735.5"/>
    <property type="RefSeq nucleotide sequence ID" value="NM_000938.3"/>
    <property type="RefSeq protein sequence ID" value="NP_000929.1"/>
</dbReference>
<dbReference type="UCSC" id="uc003hcl.1">
    <property type="organism name" value="human"/>
</dbReference>
<dbReference type="AGR" id="HGNC:9188"/>
<dbReference type="CTD" id="5431"/>
<dbReference type="DisGeNET" id="5431"/>
<dbReference type="GeneCards" id="POLR2B"/>
<dbReference type="HGNC" id="HGNC:9188">
    <property type="gene designation" value="POLR2B"/>
</dbReference>
<dbReference type="HPA" id="ENSG00000047315">
    <property type="expression patterns" value="Low tissue specificity"/>
</dbReference>
<dbReference type="MIM" id="180661">
    <property type="type" value="gene"/>
</dbReference>
<dbReference type="neXtProt" id="NX_P30876"/>
<dbReference type="OpenTargets" id="ENSG00000047315"/>
<dbReference type="PharmGKB" id="PA33508"/>
<dbReference type="VEuPathDB" id="HostDB:ENSG00000047315"/>
<dbReference type="eggNOG" id="KOG0214">
    <property type="taxonomic scope" value="Eukaryota"/>
</dbReference>
<dbReference type="GeneTree" id="ENSGT00950000183132"/>
<dbReference type="InParanoid" id="P30876"/>
<dbReference type="OMA" id="CYDRNDS"/>
<dbReference type="OrthoDB" id="10248617at2759"/>
<dbReference type="PAN-GO" id="P30876">
    <property type="GO annotations" value="2 GO annotations based on evolutionary models"/>
</dbReference>
<dbReference type="PhylomeDB" id="P30876"/>
<dbReference type="TreeFam" id="TF103037"/>
<dbReference type="PathwayCommons" id="P30876"/>
<dbReference type="Reactome" id="R-HSA-112382">
    <property type="pathway name" value="Formation of RNA Pol II elongation complex"/>
</dbReference>
<dbReference type="Reactome" id="R-HSA-113418">
    <property type="pathway name" value="Formation of the Early Elongation Complex"/>
</dbReference>
<dbReference type="Reactome" id="R-HSA-167152">
    <property type="pathway name" value="Formation of HIV elongation complex in the absence of HIV Tat"/>
</dbReference>
<dbReference type="Reactome" id="R-HSA-167158">
    <property type="pathway name" value="Formation of the HIV-1 Early Elongation Complex"/>
</dbReference>
<dbReference type="Reactome" id="R-HSA-167160">
    <property type="pathway name" value="RNA Pol II CTD phosphorylation and interaction with CE during HIV infection"/>
</dbReference>
<dbReference type="Reactome" id="R-HSA-167161">
    <property type="pathway name" value="HIV Transcription Initiation"/>
</dbReference>
<dbReference type="Reactome" id="R-HSA-167162">
    <property type="pathway name" value="RNA Polymerase II HIV Promoter Escape"/>
</dbReference>
<dbReference type="Reactome" id="R-HSA-167172">
    <property type="pathway name" value="Transcription of the HIV genome"/>
</dbReference>
<dbReference type="Reactome" id="R-HSA-167200">
    <property type="pathway name" value="Formation of HIV-1 elongation complex containing HIV-1 Tat"/>
</dbReference>
<dbReference type="Reactome" id="R-HSA-167238">
    <property type="pathway name" value="Pausing and recovery of Tat-mediated HIV elongation"/>
</dbReference>
<dbReference type="Reactome" id="R-HSA-167242">
    <property type="pathway name" value="Abortive elongation of HIV-1 transcript in the absence of Tat"/>
</dbReference>
<dbReference type="Reactome" id="R-HSA-167243">
    <property type="pathway name" value="Tat-mediated HIV elongation arrest and recovery"/>
</dbReference>
<dbReference type="Reactome" id="R-HSA-167246">
    <property type="pathway name" value="Tat-mediated elongation of the HIV-1 transcript"/>
</dbReference>
<dbReference type="Reactome" id="R-HSA-167287">
    <property type="pathway name" value="HIV elongation arrest and recovery"/>
</dbReference>
<dbReference type="Reactome" id="R-HSA-167290">
    <property type="pathway name" value="Pausing and recovery of HIV elongation"/>
</dbReference>
<dbReference type="Reactome" id="R-HSA-168325">
    <property type="pathway name" value="Viral Messenger RNA Synthesis"/>
</dbReference>
<dbReference type="Reactome" id="R-HSA-203927">
    <property type="pathway name" value="MicroRNA (miRNA) biogenesis"/>
</dbReference>
<dbReference type="Reactome" id="R-HSA-5578749">
    <property type="pathway name" value="Transcriptional regulation by small RNAs"/>
</dbReference>
<dbReference type="Reactome" id="R-HSA-5601884">
    <property type="pathway name" value="PIWI-interacting RNA (piRNA) biogenesis"/>
</dbReference>
<dbReference type="Reactome" id="R-HSA-5617472">
    <property type="pathway name" value="Activation of anterior HOX genes in hindbrain development during early embryogenesis"/>
</dbReference>
<dbReference type="Reactome" id="R-HSA-674695">
    <property type="pathway name" value="RNA Polymerase II Pre-transcription Events"/>
</dbReference>
<dbReference type="Reactome" id="R-HSA-6781823">
    <property type="pathway name" value="Formation of TC-NER Pre-Incision Complex"/>
</dbReference>
<dbReference type="Reactome" id="R-HSA-6781827">
    <property type="pathway name" value="Transcription-Coupled Nucleotide Excision Repair (TC-NER)"/>
</dbReference>
<dbReference type="Reactome" id="R-HSA-6782135">
    <property type="pathway name" value="Dual incision in TC-NER"/>
</dbReference>
<dbReference type="Reactome" id="R-HSA-6782210">
    <property type="pathway name" value="Gap-filling DNA repair synthesis and ligation in TC-NER"/>
</dbReference>
<dbReference type="Reactome" id="R-HSA-6796648">
    <property type="pathway name" value="TP53 Regulates Transcription of DNA Repair Genes"/>
</dbReference>
<dbReference type="Reactome" id="R-HSA-6803529">
    <property type="pathway name" value="FGFR2 alternative splicing"/>
</dbReference>
<dbReference type="Reactome" id="R-HSA-6807505">
    <property type="pathway name" value="RNA polymerase II transcribes snRNA genes"/>
</dbReference>
<dbReference type="Reactome" id="R-HSA-72086">
    <property type="pathway name" value="mRNA Capping"/>
</dbReference>
<dbReference type="Reactome" id="R-HSA-72163">
    <property type="pathway name" value="mRNA Splicing - Major Pathway"/>
</dbReference>
<dbReference type="Reactome" id="R-HSA-72165">
    <property type="pathway name" value="mRNA Splicing - Minor Pathway"/>
</dbReference>
<dbReference type="Reactome" id="R-HSA-72203">
    <property type="pathway name" value="Processing of Capped Intron-Containing Pre-mRNA"/>
</dbReference>
<dbReference type="Reactome" id="R-HSA-73776">
    <property type="pathway name" value="RNA Polymerase II Promoter Escape"/>
</dbReference>
<dbReference type="Reactome" id="R-HSA-73779">
    <property type="pathway name" value="RNA Polymerase II Transcription Pre-Initiation And Promoter Opening"/>
</dbReference>
<dbReference type="Reactome" id="R-HSA-75953">
    <property type="pathway name" value="RNA Polymerase II Transcription Initiation"/>
</dbReference>
<dbReference type="Reactome" id="R-HSA-75955">
    <property type="pathway name" value="RNA Polymerase II Transcription Elongation"/>
</dbReference>
<dbReference type="Reactome" id="R-HSA-76042">
    <property type="pathway name" value="RNA Polymerase II Transcription Initiation And Promoter Clearance"/>
</dbReference>
<dbReference type="Reactome" id="R-HSA-77075">
    <property type="pathway name" value="RNA Pol II CTD phosphorylation and interaction with CE"/>
</dbReference>
<dbReference type="Reactome" id="R-HSA-8851708">
    <property type="pathway name" value="Signaling by FGFR2 IIIa TM"/>
</dbReference>
<dbReference type="Reactome" id="R-HSA-9018519">
    <property type="pathway name" value="Estrogen-dependent gene expression"/>
</dbReference>
<dbReference type="Reactome" id="R-HSA-9670095">
    <property type="pathway name" value="Inhibition of DNA recombination at telomere"/>
</dbReference>
<dbReference type="SignaLink" id="P30876"/>
<dbReference type="SIGNOR" id="P30876"/>
<dbReference type="BioGRID-ORCS" id="5431">
    <property type="hits" value="829 hits in 1159 CRISPR screens"/>
</dbReference>
<dbReference type="CD-CODE" id="DEE660B4">
    <property type="entry name" value="Stress granule"/>
</dbReference>
<dbReference type="ChiTaRS" id="POLR2B">
    <property type="organism name" value="human"/>
</dbReference>
<dbReference type="EvolutionaryTrace" id="P30876"/>
<dbReference type="GeneWiki" id="POLR2B"/>
<dbReference type="GenomeRNAi" id="5431"/>
<dbReference type="Pharos" id="P30876">
    <property type="development level" value="Tbio"/>
</dbReference>
<dbReference type="PRO" id="PR:P30876"/>
<dbReference type="Proteomes" id="UP000005640">
    <property type="component" value="Chromosome 4"/>
</dbReference>
<dbReference type="RNAct" id="P30876">
    <property type="molecule type" value="protein"/>
</dbReference>
<dbReference type="Bgee" id="ENSG00000047315">
    <property type="expression patterns" value="Expressed in epithelium of nasopharynx and 217 other cell types or tissues"/>
</dbReference>
<dbReference type="ExpressionAtlas" id="P30876">
    <property type="expression patterns" value="baseline and differential"/>
</dbReference>
<dbReference type="GO" id="GO:0016020">
    <property type="term" value="C:membrane"/>
    <property type="evidence" value="ECO:0007005"/>
    <property type="project" value="UniProtKB"/>
</dbReference>
<dbReference type="GO" id="GO:0005739">
    <property type="term" value="C:mitochondrion"/>
    <property type="evidence" value="ECO:0007669"/>
    <property type="project" value="GOC"/>
</dbReference>
<dbReference type="GO" id="GO:0005654">
    <property type="term" value="C:nucleoplasm"/>
    <property type="evidence" value="ECO:0000314"/>
    <property type="project" value="HPA"/>
</dbReference>
<dbReference type="GO" id="GO:0005634">
    <property type="term" value="C:nucleus"/>
    <property type="evidence" value="ECO:0000314"/>
    <property type="project" value="UniProtKB"/>
</dbReference>
<dbReference type="GO" id="GO:0005665">
    <property type="term" value="C:RNA polymerase II, core complex"/>
    <property type="evidence" value="ECO:0000314"/>
    <property type="project" value="UniProtKB"/>
</dbReference>
<dbReference type="GO" id="GO:0003682">
    <property type="term" value="F:chromatin binding"/>
    <property type="evidence" value="ECO:0007669"/>
    <property type="project" value="Ensembl"/>
</dbReference>
<dbReference type="GO" id="GO:0003677">
    <property type="term" value="F:DNA binding"/>
    <property type="evidence" value="ECO:0000304"/>
    <property type="project" value="ProtInc"/>
</dbReference>
<dbReference type="GO" id="GO:0003899">
    <property type="term" value="F:DNA-directed RNA polymerase activity"/>
    <property type="evidence" value="ECO:0000314"/>
    <property type="project" value="UniProtKB"/>
</dbReference>
<dbReference type="GO" id="GO:0016787">
    <property type="term" value="F:hydrolase activity"/>
    <property type="evidence" value="ECO:0007669"/>
    <property type="project" value="UniProtKB-KW"/>
</dbReference>
<dbReference type="GO" id="GO:0032549">
    <property type="term" value="F:ribonucleoside binding"/>
    <property type="evidence" value="ECO:0007669"/>
    <property type="project" value="InterPro"/>
</dbReference>
<dbReference type="GO" id="GO:0003723">
    <property type="term" value="F:RNA binding"/>
    <property type="evidence" value="ECO:0007005"/>
    <property type="project" value="UniProtKB"/>
</dbReference>
<dbReference type="GO" id="GO:0003968">
    <property type="term" value="F:RNA-directed RNA polymerase activity"/>
    <property type="evidence" value="ECO:0000314"/>
    <property type="project" value="UniProtKB"/>
</dbReference>
<dbReference type="GO" id="GO:0008270">
    <property type="term" value="F:zinc ion binding"/>
    <property type="evidence" value="ECO:0007669"/>
    <property type="project" value="UniProtKB-KW"/>
</dbReference>
<dbReference type="GO" id="GO:0006366">
    <property type="term" value="P:transcription by RNA polymerase II"/>
    <property type="evidence" value="ECO:0000314"/>
    <property type="project" value="UniProtKB"/>
</dbReference>
<dbReference type="CDD" id="cd00653">
    <property type="entry name" value="RNA_pol_B_RPB2"/>
    <property type="match status" value="1"/>
</dbReference>
<dbReference type="FunFam" id="2.40.270.10:FF:000026">
    <property type="match status" value="1"/>
</dbReference>
<dbReference type="FunFam" id="2.40.50.150:FF:000002">
    <property type="entry name" value="DNA-directed RNA polymerase subunit beta"/>
    <property type="match status" value="1"/>
</dbReference>
<dbReference type="FunFam" id="3.90.1070.20:FF:000001">
    <property type="entry name" value="DNA-directed RNA polymerase subunit beta"/>
    <property type="match status" value="1"/>
</dbReference>
<dbReference type="FunFam" id="3.90.1100.10:FF:000003">
    <property type="entry name" value="DNA-directed RNA polymerase subunit beta"/>
    <property type="match status" value="1"/>
</dbReference>
<dbReference type="FunFam" id="3.90.1100.10:FF:000043">
    <property type="entry name" value="DNA-directed RNA polymerase subunit beta"/>
    <property type="match status" value="1"/>
</dbReference>
<dbReference type="FunFam" id="3.90.1110.10:FF:000002">
    <property type="entry name" value="DNA-directed RNA polymerase subunit beta"/>
    <property type="match status" value="1"/>
</dbReference>
<dbReference type="FunFam" id="3.90.1800.10:FF:000002">
    <property type="entry name" value="DNA-directed RNA polymerase subunit beta"/>
    <property type="match status" value="1"/>
</dbReference>
<dbReference type="Gene3D" id="2.40.50.150">
    <property type="match status" value="1"/>
</dbReference>
<dbReference type="Gene3D" id="3.90.1070.20">
    <property type="match status" value="1"/>
</dbReference>
<dbReference type="Gene3D" id="3.90.1100.10">
    <property type="match status" value="1"/>
</dbReference>
<dbReference type="Gene3D" id="2.40.270.10">
    <property type="entry name" value="DNA-directed RNA polymerase, subunit 2, domain 6"/>
    <property type="match status" value="1"/>
</dbReference>
<dbReference type="Gene3D" id="3.90.1800.10">
    <property type="entry name" value="RNA polymerase alpha subunit dimerisation domain"/>
    <property type="match status" value="1"/>
</dbReference>
<dbReference type="Gene3D" id="3.90.1110.10">
    <property type="entry name" value="RNA polymerase Rpb2, domain 2"/>
    <property type="match status" value="1"/>
</dbReference>
<dbReference type="InterPro" id="IPR015712">
    <property type="entry name" value="DNA-dir_RNA_pol_su2"/>
</dbReference>
<dbReference type="InterPro" id="IPR007120">
    <property type="entry name" value="DNA-dir_RNAP_su2_dom"/>
</dbReference>
<dbReference type="InterPro" id="IPR037033">
    <property type="entry name" value="DNA-dir_RNAP_su2_hyb_sf"/>
</dbReference>
<dbReference type="InterPro" id="IPR007121">
    <property type="entry name" value="RNA_pol_bsu_CS"/>
</dbReference>
<dbReference type="InterPro" id="IPR007644">
    <property type="entry name" value="RNA_pol_bsu_protrusion"/>
</dbReference>
<dbReference type="InterPro" id="IPR007642">
    <property type="entry name" value="RNA_pol_Rpb2_2"/>
</dbReference>
<dbReference type="InterPro" id="IPR037034">
    <property type="entry name" value="RNA_pol_Rpb2_2_sf"/>
</dbReference>
<dbReference type="InterPro" id="IPR007645">
    <property type="entry name" value="RNA_pol_Rpb2_3"/>
</dbReference>
<dbReference type="InterPro" id="IPR007646">
    <property type="entry name" value="RNA_pol_Rpb2_4"/>
</dbReference>
<dbReference type="InterPro" id="IPR007647">
    <property type="entry name" value="RNA_pol_Rpb2_5"/>
</dbReference>
<dbReference type="InterPro" id="IPR007641">
    <property type="entry name" value="RNA_pol_Rpb2_7"/>
</dbReference>
<dbReference type="InterPro" id="IPR014724">
    <property type="entry name" value="RNA_pol_RPB2_OB-fold"/>
</dbReference>
<dbReference type="NCBIfam" id="NF007175">
    <property type="entry name" value="PRK09606.1"/>
    <property type="match status" value="1"/>
</dbReference>
<dbReference type="PANTHER" id="PTHR20856">
    <property type="entry name" value="DNA-DIRECTED RNA POLYMERASE I SUBUNIT 2"/>
    <property type="match status" value="1"/>
</dbReference>
<dbReference type="Pfam" id="PF04563">
    <property type="entry name" value="RNA_pol_Rpb2_1"/>
    <property type="match status" value="1"/>
</dbReference>
<dbReference type="Pfam" id="PF04561">
    <property type="entry name" value="RNA_pol_Rpb2_2"/>
    <property type="match status" value="1"/>
</dbReference>
<dbReference type="Pfam" id="PF04565">
    <property type="entry name" value="RNA_pol_Rpb2_3"/>
    <property type="match status" value="1"/>
</dbReference>
<dbReference type="Pfam" id="PF04566">
    <property type="entry name" value="RNA_pol_Rpb2_4"/>
    <property type="match status" value="1"/>
</dbReference>
<dbReference type="Pfam" id="PF04567">
    <property type="entry name" value="RNA_pol_Rpb2_5"/>
    <property type="match status" value="1"/>
</dbReference>
<dbReference type="Pfam" id="PF00562">
    <property type="entry name" value="RNA_pol_Rpb2_6"/>
    <property type="match status" value="1"/>
</dbReference>
<dbReference type="Pfam" id="PF04560">
    <property type="entry name" value="RNA_pol_Rpb2_7"/>
    <property type="match status" value="1"/>
</dbReference>
<dbReference type="SUPFAM" id="SSF64484">
    <property type="entry name" value="beta and beta-prime subunits of DNA dependent RNA-polymerase"/>
    <property type="match status" value="1"/>
</dbReference>
<dbReference type="PROSITE" id="PS01166">
    <property type="entry name" value="RNA_POL_BETA"/>
    <property type="match status" value="1"/>
</dbReference>
<protein>
    <recommendedName>
        <fullName>DNA-directed RNA polymerase II subunit RPB2</fullName>
        <ecNumber evidence="5 6 8">2.7.7.6</ecNumber>
    </recommendedName>
    <alternativeName>
        <fullName>3'-5' exoribonuclease</fullName>
        <ecNumber evidence="7">3.1.13.-</ecNumber>
    </alternativeName>
    <alternativeName>
        <fullName>DNA-directed RNA polymerase II 140 kDa polypeptide</fullName>
    </alternativeName>
    <alternativeName>
        <fullName>DNA-directed RNA polymerase II subunit B</fullName>
    </alternativeName>
    <alternativeName>
        <fullName>RNA polymerase II subunit 2</fullName>
    </alternativeName>
    <alternativeName>
        <fullName>RNA polymerase II subunit B2</fullName>
    </alternativeName>
    <alternativeName>
        <fullName>RNA-directed RNA polymerase II subunit RPB2</fullName>
        <ecNumber evidence="4">2.7.7.48</ecNumber>
    </alternativeName>
</protein>
<feature type="chain" id="PRO_0000048085" description="DNA-directed RNA polymerase II subunit RPB2">
    <location>
        <begin position="1"/>
        <end position="1174"/>
    </location>
</feature>
<feature type="zinc finger region" description="C4-type" evidence="5 12">
    <location>
        <begin position="1119"/>
        <end position="1140"/>
    </location>
</feature>
<feature type="binding site" evidence="5 13">
    <location>
        <position position="409"/>
    </location>
    <ligand>
        <name>DNA</name>
        <dbReference type="ChEBI" id="CHEBI:16991"/>
        <label>promoter</label>
    </ligand>
</feature>
<feature type="binding site" evidence="1">
    <location>
        <position position="456"/>
    </location>
    <ligand>
        <name>DNA</name>
        <dbReference type="ChEBI" id="CHEBI:16991"/>
        <label>template strand</label>
    </ligand>
</feature>
<feature type="binding site" evidence="1">
    <location>
        <position position="731"/>
    </location>
    <ligand>
        <name>RNA</name>
        <dbReference type="ChEBI" id="CHEBI:33697"/>
    </ligand>
</feature>
<feature type="binding site" evidence="5 13">
    <location>
        <position position="792"/>
    </location>
    <ligand>
        <name>Mg(2+)</name>
        <dbReference type="ChEBI" id="CHEBI:18420"/>
        <note>ligand shared with POLR2A/RPB1</note>
    </ligand>
</feature>
<feature type="binding site" evidence="1">
    <location>
        <position position="841"/>
    </location>
    <ligand>
        <name>RNA</name>
        <dbReference type="ChEBI" id="CHEBI:33697"/>
    </ligand>
</feature>
<feature type="binding site" evidence="1">
    <location>
        <position position="890"/>
    </location>
    <ligand>
        <name>RNA</name>
        <dbReference type="ChEBI" id="CHEBI:33697"/>
    </ligand>
</feature>
<feature type="binding site" evidence="1">
    <location>
        <position position="942"/>
    </location>
    <ligand>
        <name>RNA</name>
        <dbReference type="ChEBI" id="CHEBI:33697"/>
    </ligand>
</feature>
<feature type="binding site" evidence="1">
    <location>
        <position position="1078"/>
    </location>
    <ligand>
        <name>DNA</name>
        <dbReference type="ChEBI" id="CHEBI:16991"/>
        <label>template strand</label>
    </ligand>
</feature>
<feature type="binding site" evidence="1">
    <location>
        <position position="1085"/>
    </location>
    <ligand>
        <name>DNA</name>
        <dbReference type="ChEBI" id="CHEBI:16991"/>
        <label>template strand</label>
    </ligand>
</feature>
<feature type="binding site" evidence="5 12">
    <location>
        <position position="1119"/>
    </location>
    <ligand>
        <name>Zn(2+)</name>
        <dbReference type="ChEBI" id="CHEBI:29105"/>
    </ligand>
</feature>
<feature type="binding site" evidence="5 12">
    <location>
        <position position="1122"/>
    </location>
    <ligand>
        <name>Zn(2+)</name>
        <dbReference type="ChEBI" id="CHEBI:29105"/>
    </ligand>
</feature>
<feature type="binding site" evidence="5 12">
    <location>
        <position position="1137"/>
    </location>
    <ligand>
        <name>Zn(2+)</name>
        <dbReference type="ChEBI" id="CHEBI:29105"/>
    </ligand>
</feature>
<feature type="binding site" evidence="5 12">
    <location>
        <position position="1140"/>
    </location>
    <ligand>
        <name>Zn(2+)</name>
        <dbReference type="ChEBI" id="CHEBI:29105"/>
    </ligand>
</feature>
<feature type="modified residue" description="Phosphoserine" evidence="14">
    <location>
        <position position="937"/>
    </location>
</feature>
<feature type="modified residue" description="N6-methyllysine" evidence="15">
    <location>
        <position position="1052"/>
    </location>
</feature>